<proteinExistence type="inferred from homology"/>
<organism>
    <name type="scientific">Staphylococcus aureus (strain MSSA476)</name>
    <dbReference type="NCBI Taxonomy" id="282459"/>
    <lineage>
        <taxon>Bacteria</taxon>
        <taxon>Bacillati</taxon>
        <taxon>Bacillota</taxon>
        <taxon>Bacilli</taxon>
        <taxon>Bacillales</taxon>
        <taxon>Staphylococcaceae</taxon>
        <taxon>Staphylococcus</taxon>
    </lineage>
</organism>
<keyword id="KW-0010">Activator</keyword>
<keyword id="KW-0963">Cytoplasm</keyword>
<keyword id="KW-0238">DNA-binding</keyword>
<keyword id="KW-0597">Phosphoprotein</keyword>
<keyword id="KW-0804">Transcription</keyword>
<keyword id="KW-0805">Transcription regulation</keyword>
<keyword id="KW-0902">Two-component regulatory system</keyword>
<dbReference type="EMBL" id="BX571857">
    <property type="protein sequence ID" value="CAG41790.1"/>
    <property type="status" value="ALT_INIT"/>
    <property type="molecule type" value="Genomic_DNA"/>
</dbReference>
<dbReference type="SMR" id="Q6GD72"/>
<dbReference type="KEGG" id="sas:SAS0018"/>
<dbReference type="HOGENOM" id="CLU_000445_30_4_9"/>
<dbReference type="GO" id="GO:0005829">
    <property type="term" value="C:cytosol"/>
    <property type="evidence" value="ECO:0007669"/>
    <property type="project" value="TreeGrafter"/>
</dbReference>
<dbReference type="GO" id="GO:0032993">
    <property type="term" value="C:protein-DNA complex"/>
    <property type="evidence" value="ECO:0007669"/>
    <property type="project" value="TreeGrafter"/>
</dbReference>
<dbReference type="GO" id="GO:0000156">
    <property type="term" value="F:phosphorelay response regulator activity"/>
    <property type="evidence" value="ECO:0007669"/>
    <property type="project" value="TreeGrafter"/>
</dbReference>
<dbReference type="GO" id="GO:0000976">
    <property type="term" value="F:transcription cis-regulatory region binding"/>
    <property type="evidence" value="ECO:0007669"/>
    <property type="project" value="TreeGrafter"/>
</dbReference>
<dbReference type="GO" id="GO:0006355">
    <property type="term" value="P:regulation of DNA-templated transcription"/>
    <property type="evidence" value="ECO:0007669"/>
    <property type="project" value="InterPro"/>
</dbReference>
<dbReference type="CDD" id="cd17614">
    <property type="entry name" value="REC_OmpR_YycF-like"/>
    <property type="match status" value="1"/>
</dbReference>
<dbReference type="CDD" id="cd00383">
    <property type="entry name" value="trans_reg_C"/>
    <property type="match status" value="1"/>
</dbReference>
<dbReference type="FunFam" id="1.10.10.10:FF:000089">
    <property type="entry name" value="Alkaline phosphatase synthesis response regulator"/>
    <property type="match status" value="1"/>
</dbReference>
<dbReference type="FunFam" id="3.40.50.2300:FF:000052">
    <property type="entry name" value="DNA-binding response regulator YycF"/>
    <property type="match status" value="1"/>
</dbReference>
<dbReference type="Gene3D" id="3.40.50.2300">
    <property type="match status" value="1"/>
</dbReference>
<dbReference type="Gene3D" id="6.10.250.690">
    <property type="match status" value="1"/>
</dbReference>
<dbReference type="Gene3D" id="1.10.10.10">
    <property type="entry name" value="Winged helix-like DNA-binding domain superfamily/Winged helix DNA-binding domain"/>
    <property type="match status" value="1"/>
</dbReference>
<dbReference type="InterPro" id="IPR011006">
    <property type="entry name" value="CheY-like_superfamily"/>
</dbReference>
<dbReference type="InterPro" id="IPR001867">
    <property type="entry name" value="OmpR/PhoB-type_DNA-bd"/>
</dbReference>
<dbReference type="InterPro" id="IPR047791">
    <property type="entry name" value="Resp_reg_WalR"/>
</dbReference>
<dbReference type="InterPro" id="IPR016032">
    <property type="entry name" value="Sig_transdc_resp-reg_C-effctor"/>
</dbReference>
<dbReference type="InterPro" id="IPR001789">
    <property type="entry name" value="Sig_transdc_resp-reg_receiver"/>
</dbReference>
<dbReference type="InterPro" id="IPR039420">
    <property type="entry name" value="WalR-like"/>
</dbReference>
<dbReference type="InterPro" id="IPR036388">
    <property type="entry name" value="WH-like_DNA-bd_sf"/>
</dbReference>
<dbReference type="NCBIfam" id="NF040534">
    <property type="entry name" value="resp_reg_YycF"/>
    <property type="match status" value="1"/>
</dbReference>
<dbReference type="PANTHER" id="PTHR48111:SF40">
    <property type="entry name" value="PHOSPHATE REGULON TRANSCRIPTIONAL REGULATORY PROTEIN PHOB"/>
    <property type="match status" value="1"/>
</dbReference>
<dbReference type="PANTHER" id="PTHR48111">
    <property type="entry name" value="REGULATOR OF RPOS"/>
    <property type="match status" value="1"/>
</dbReference>
<dbReference type="Pfam" id="PF00072">
    <property type="entry name" value="Response_reg"/>
    <property type="match status" value="1"/>
</dbReference>
<dbReference type="Pfam" id="PF00486">
    <property type="entry name" value="Trans_reg_C"/>
    <property type="match status" value="1"/>
</dbReference>
<dbReference type="SMART" id="SM00448">
    <property type="entry name" value="REC"/>
    <property type="match status" value="1"/>
</dbReference>
<dbReference type="SMART" id="SM00862">
    <property type="entry name" value="Trans_reg_C"/>
    <property type="match status" value="1"/>
</dbReference>
<dbReference type="SUPFAM" id="SSF46894">
    <property type="entry name" value="C-terminal effector domain of the bipartite response regulators"/>
    <property type="match status" value="1"/>
</dbReference>
<dbReference type="SUPFAM" id="SSF52172">
    <property type="entry name" value="CheY-like"/>
    <property type="match status" value="1"/>
</dbReference>
<dbReference type="PROSITE" id="PS51755">
    <property type="entry name" value="OMPR_PHOB"/>
    <property type="match status" value="1"/>
</dbReference>
<dbReference type="PROSITE" id="PS50110">
    <property type="entry name" value="RESPONSE_REGULATORY"/>
    <property type="match status" value="1"/>
</dbReference>
<evidence type="ECO:0000250" key="1">
    <source>
        <dbReference type="UniProtKB" id="Q2G2U6"/>
    </source>
</evidence>
<evidence type="ECO:0000250" key="2">
    <source>
        <dbReference type="UniProtKB" id="Q7A8E1"/>
    </source>
</evidence>
<evidence type="ECO:0000250" key="3">
    <source>
        <dbReference type="UniProtKB" id="Q9RDT5"/>
    </source>
</evidence>
<evidence type="ECO:0000255" key="4">
    <source>
        <dbReference type="PROSITE-ProRule" id="PRU00169"/>
    </source>
</evidence>
<evidence type="ECO:0000255" key="5">
    <source>
        <dbReference type="PROSITE-ProRule" id="PRU01091"/>
    </source>
</evidence>
<evidence type="ECO:0000305" key="6"/>
<accession>Q6GD72</accession>
<reference key="1">
    <citation type="journal article" date="2004" name="Proc. Natl. Acad. Sci. U.S.A.">
        <title>Complete genomes of two clinical Staphylococcus aureus strains: evidence for the rapid evolution of virulence and drug resistance.</title>
        <authorList>
            <person name="Holden M.T.G."/>
            <person name="Feil E.J."/>
            <person name="Lindsay J.A."/>
            <person name="Peacock S.J."/>
            <person name="Day N.P.J."/>
            <person name="Enright M.C."/>
            <person name="Foster T.J."/>
            <person name="Moore C.E."/>
            <person name="Hurst L."/>
            <person name="Atkin R."/>
            <person name="Barron A."/>
            <person name="Bason N."/>
            <person name="Bentley S.D."/>
            <person name="Chillingworth C."/>
            <person name="Chillingworth T."/>
            <person name="Churcher C."/>
            <person name="Clark L."/>
            <person name="Corton C."/>
            <person name="Cronin A."/>
            <person name="Doggett J."/>
            <person name="Dowd L."/>
            <person name="Feltwell T."/>
            <person name="Hance Z."/>
            <person name="Harris B."/>
            <person name="Hauser H."/>
            <person name="Holroyd S."/>
            <person name="Jagels K."/>
            <person name="James K.D."/>
            <person name="Lennard N."/>
            <person name="Line A."/>
            <person name="Mayes R."/>
            <person name="Moule S."/>
            <person name="Mungall K."/>
            <person name="Ormond D."/>
            <person name="Quail M.A."/>
            <person name="Rabbinowitsch E."/>
            <person name="Rutherford K.M."/>
            <person name="Sanders M."/>
            <person name="Sharp S."/>
            <person name="Simmonds M."/>
            <person name="Stevens K."/>
            <person name="Whitehead S."/>
            <person name="Barrell B.G."/>
            <person name="Spratt B.G."/>
            <person name="Parkhill J."/>
        </authorList>
    </citation>
    <scope>NUCLEOTIDE SEQUENCE [LARGE SCALE GENOMIC DNA]</scope>
    <source>
        <strain>MSSA476</strain>
    </source>
</reference>
<comment type="function">
    <text evidence="1 3">Member of the two-component regulatory system WalK/WalR that regulates genes involved in cell wall metabolism, virulence regulation, biofilm production, oxidative stress resistance and antibiotic resistance via direct or indirect regulation of autolysins (By similarity). Functions as a transcription regulator by direct binding to promoter regions (By similarity).</text>
</comment>
<comment type="subcellular location">
    <subcellularLocation>
        <location evidence="6">Cytoplasm</location>
    </subcellularLocation>
</comment>
<comment type="PTM">
    <text evidence="2 3">Phosphorylated by WalK on Asp-53 (By similarity). Phosphorylated by PknB on Thr-101 (By similarity).</text>
</comment>
<comment type="sequence caution" evidence="6">
    <conflict type="erroneous initiation">
        <sequence resource="EMBL-CDS" id="CAG41790"/>
    </conflict>
</comment>
<protein>
    <recommendedName>
        <fullName evidence="6">Transcriptional regulatory protein WalR</fullName>
    </recommendedName>
</protein>
<name>WALR_STAAS</name>
<feature type="chain" id="PRO_0000353037" description="Transcriptional regulatory protein WalR">
    <location>
        <begin position="1"/>
        <end position="233"/>
    </location>
</feature>
<feature type="domain" description="Response regulatory" evidence="4">
    <location>
        <begin position="4"/>
        <end position="117"/>
    </location>
</feature>
<feature type="DNA-binding region" description="OmpR/PhoB-type" evidence="5">
    <location>
        <begin position="132"/>
        <end position="231"/>
    </location>
</feature>
<feature type="modified residue" description="4-aspartylphosphate" evidence="4">
    <location>
        <position position="53"/>
    </location>
</feature>
<feature type="modified residue" description="Phosphothreonine" evidence="2">
    <location>
        <position position="101"/>
    </location>
</feature>
<gene>
    <name type="primary">walR</name>
    <name type="ordered locus">SAS0018</name>
</gene>
<sequence length="233" mass="27192">MARKVVVVDDEKPIADILEFNLKKEGYDVYCAYDGNDAVDLIYEEEPDIVLLDIMLPGRDGMEVCREVRKKYEMPIIMLTAKDSEIDKVLGLELGADDYVTKPFSTRELIARVKANLRRHYSQPAQDTGNVTNEITIKDIVIYPDAYSIKKRGEDIELTHREFELFHYLSKHMGQVMTREHLLQTVWGYDYFGDVRTVDVTIRRLREKIEDDPSHPEYIVTRRGVGYFLQQHE</sequence>